<comment type="function">
    <text evidence="1">Produces ATP from ADP in the presence of a proton gradient across the membrane. The gamma chain is believed to be important in regulating ATPase activity and the flow of protons through the CF(0) complex.</text>
</comment>
<comment type="subunit">
    <text evidence="1">F-type ATPases have 2 components, CF(1) - the catalytic core - and CF(0) - the membrane proton channel. CF(1) has five subunits: alpha(3), beta(3), gamma(1), delta(1), epsilon(1). CF(0) has three main subunits: a, b and c.</text>
</comment>
<comment type="subcellular location">
    <subcellularLocation>
        <location evidence="1">Cell inner membrane</location>
        <topology evidence="1">Peripheral membrane protein</topology>
    </subcellularLocation>
</comment>
<comment type="similarity">
    <text evidence="1">Belongs to the ATPase gamma chain family.</text>
</comment>
<feature type="chain" id="PRO_1000213045" description="ATP synthase gamma chain">
    <location>
        <begin position="1"/>
        <end position="323"/>
    </location>
</feature>
<organism>
    <name type="scientific">Rickettsia africae (strain ESF-5)</name>
    <dbReference type="NCBI Taxonomy" id="347255"/>
    <lineage>
        <taxon>Bacteria</taxon>
        <taxon>Pseudomonadati</taxon>
        <taxon>Pseudomonadota</taxon>
        <taxon>Alphaproteobacteria</taxon>
        <taxon>Rickettsiales</taxon>
        <taxon>Rickettsiaceae</taxon>
        <taxon>Rickettsieae</taxon>
        <taxon>Rickettsia</taxon>
        <taxon>spotted fever group</taxon>
    </lineage>
</organism>
<sequence>MSNLKQLRTRIKSVKSTQKITKAMQLVSASKMAKIKSQIANSNFYIEAVSKMMSAILSIDMYELSIEEQKFFNTVPNKANLLIVMTSQRGLCGTFNYSIIKQVKNDIKELENKGEQIKLIIIGKKGYEALKRQYVNYIDSYFELPKIHDENLMLQVKQKIMSAVENLEISNCVIYFNKFKNAMTQIMTRQQILPVAKYQDDSMIDNPIVNLVGFGYKERGVKPINNRRATSDIVGESKSIDYNYEYEGASLISNLINLYVNSQINYALLQSRASEEGARMTAMENATNNANDLISKLVLKLNRSRQAIITTELIEIIAGSEAV</sequence>
<protein>
    <recommendedName>
        <fullName evidence="1">ATP synthase gamma chain</fullName>
    </recommendedName>
    <alternativeName>
        <fullName evidence="1">ATP synthase F1 sector gamma subunit</fullName>
    </alternativeName>
    <alternativeName>
        <fullName evidence="1">F-ATPase gamma subunit</fullName>
    </alternativeName>
</protein>
<proteinExistence type="inferred from homology"/>
<gene>
    <name evidence="1" type="primary">atpG</name>
    <name type="ordered locus">RAF_ORF1127</name>
</gene>
<accession>C3PLT2</accession>
<name>ATPG_RICAE</name>
<evidence type="ECO:0000255" key="1">
    <source>
        <dbReference type="HAMAP-Rule" id="MF_00815"/>
    </source>
</evidence>
<keyword id="KW-0066">ATP synthesis</keyword>
<keyword id="KW-0997">Cell inner membrane</keyword>
<keyword id="KW-1003">Cell membrane</keyword>
<keyword id="KW-0139">CF(1)</keyword>
<keyword id="KW-0375">Hydrogen ion transport</keyword>
<keyword id="KW-0406">Ion transport</keyword>
<keyword id="KW-0472">Membrane</keyword>
<keyword id="KW-0813">Transport</keyword>
<reference key="1">
    <citation type="journal article" date="2009" name="BMC Genomics">
        <title>Analysis of the Rickettsia africae genome reveals that virulence acquisition in Rickettsia species may be explained by genome reduction.</title>
        <authorList>
            <person name="Fournier P.-E."/>
            <person name="El Karkouri K."/>
            <person name="Leroy Q."/>
            <person name="Robert C."/>
            <person name="Giumelli B."/>
            <person name="Renesto P."/>
            <person name="Socolovschi C."/>
            <person name="Parola P."/>
            <person name="Audic S."/>
            <person name="Raoult D."/>
        </authorList>
    </citation>
    <scope>NUCLEOTIDE SEQUENCE [LARGE SCALE GENOMIC DNA]</scope>
    <source>
        <strain>ESF-5</strain>
    </source>
</reference>
<dbReference type="EMBL" id="CP001612">
    <property type="protein sequence ID" value="ACP53922.1"/>
    <property type="molecule type" value="Genomic_DNA"/>
</dbReference>
<dbReference type="RefSeq" id="WP_012720050.1">
    <property type="nucleotide sequence ID" value="NC_012633.1"/>
</dbReference>
<dbReference type="SMR" id="C3PLT2"/>
<dbReference type="KEGG" id="raf:RAF_ORF1127"/>
<dbReference type="HOGENOM" id="CLU_050669_0_1_5"/>
<dbReference type="Proteomes" id="UP000002305">
    <property type="component" value="Chromosome"/>
</dbReference>
<dbReference type="GO" id="GO:0005886">
    <property type="term" value="C:plasma membrane"/>
    <property type="evidence" value="ECO:0007669"/>
    <property type="project" value="UniProtKB-SubCell"/>
</dbReference>
<dbReference type="GO" id="GO:0045259">
    <property type="term" value="C:proton-transporting ATP synthase complex"/>
    <property type="evidence" value="ECO:0007669"/>
    <property type="project" value="UniProtKB-KW"/>
</dbReference>
<dbReference type="GO" id="GO:0005524">
    <property type="term" value="F:ATP binding"/>
    <property type="evidence" value="ECO:0007669"/>
    <property type="project" value="UniProtKB-UniRule"/>
</dbReference>
<dbReference type="GO" id="GO:0046933">
    <property type="term" value="F:proton-transporting ATP synthase activity, rotational mechanism"/>
    <property type="evidence" value="ECO:0007669"/>
    <property type="project" value="UniProtKB-UniRule"/>
</dbReference>
<dbReference type="GO" id="GO:0042777">
    <property type="term" value="P:proton motive force-driven plasma membrane ATP synthesis"/>
    <property type="evidence" value="ECO:0007669"/>
    <property type="project" value="UniProtKB-UniRule"/>
</dbReference>
<dbReference type="CDD" id="cd12151">
    <property type="entry name" value="F1-ATPase_gamma"/>
    <property type="match status" value="1"/>
</dbReference>
<dbReference type="Gene3D" id="3.40.1380.10">
    <property type="match status" value="1"/>
</dbReference>
<dbReference type="Gene3D" id="1.10.287.80">
    <property type="entry name" value="ATP synthase, gamma subunit, helix hairpin domain"/>
    <property type="match status" value="2"/>
</dbReference>
<dbReference type="HAMAP" id="MF_00815">
    <property type="entry name" value="ATP_synth_gamma_bact"/>
    <property type="match status" value="1"/>
</dbReference>
<dbReference type="InterPro" id="IPR035968">
    <property type="entry name" value="ATP_synth_F1_ATPase_gsu"/>
</dbReference>
<dbReference type="InterPro" id="IPR000131">
    <property type="entry name" value="ATP_synth_F1_gsu"/>
</dbReference>
<dbReference type="InterPro" id="IPR022436">
    <property type="entry name" value="RPE2"/>
</dbReference>
<dbReference type="NCBIfam" id="TIGR01146">
    <property type="entry name" value="ATPsyn_F1gamma"/>
    <property type="match status" value="1"/>
</dbReference>
<dbReference type="NCBIfam" id="TIGR03774">
    <property type="entry name" value="RPE2"/>
    <property type="match status" value="1"/>
</dbReference>
<dbReference type="PANTHER" id="PTHR11693">
    <property type="entry name" value="ATP SYNTHASE GAMMA CHAIN"/>
    <property type="match status" value="1"/>
</dbReference>
<dbReference type="PANTHER" id="PTHR11693:SF22">
    <property type="entry name" value="ATP SYNTHASE SUBUNIT GAMMA, MITOCHONDRIAL"/>
    <property type="match status" value="1"/>
</dbReference>
<dbReference type="Pfam" id="PF00231">
    <property type="entry name" value="ATP-synt"/>
    <property type="match status" value="1"/>
</dbReference>
<dbReference type="PRINTS" id="PR00126">
    <property type="entry name" value="ATPASEGAMMA"/>
</dbReference>
<dbReference type="SUPFAM" id="SSF52943">
    <property type="entry name" value="ATP synthase (F1-ATPase), gamma subunit"/>
    <property type="match status" value="1"/>
</dbReference>